<name>TRHO_SYNSC</name>
<organism>
    <name type="scientific">Synechococcus sp. (strain CC9605)</name>
    <dbReference type="NCBI Taxonomy" id="110662"/>
    <lineage>
        <taxon>Bacteria</taxon>
        <taxon>Bacillati</taxon>
        <taxon>Cyanobacteriota</taxon>
        <taxon>Cyanophyceae</taxon>
        <taxon>Synechococcales</taxon>
        <taxon>Synechococcaceae</taxon>
        <taxon>Synechococcus</taxon>
    </lineage>
</organism>
<proteinExistence type="inferred from homology"/>
<gene>
    <name evidence="1" type="primary">trhO</name>
    <name type="ordered locus">Syncc9605_1635</name>
</gene>
<sequence>MNPSNLEPGLANDSRLLVAAFYAFTPLDDERRETLLSSLPTLARNGSVLGSVLVAHEGVNGTISGPESAVDAVLDHLRTSFDLGDEHYARLEVKRSWAEKPVFRRFKARRKKEIVTIGVASVDPSTSVGTYVEAEHWNALVDDPDTLVIDTRNSYETAIGTFEGAIDPSTESFRDFPQWAESTLRPLIEQKSSKRIAMFCTGGIRCEKASSYLQQQGFGEVHHLRGGILKYLEQVPEAESRWQGECFVFDQRVALNHQLEPGEHSLCHACGLPVSAQQRELPSYIKGVQCLHCVDRFSDADRERFAMRQRQIDQRQIEQHKINRQQG</sequence>
<accession>Q3AJ48</accession>
<protein>
    <recommendedName>
        <fullName evidence="1">tRNA uridine(34) hydroxylase</fullName>
        <ecNumber evidence="1">1.14.-.-</ecNumber>
    </recommendedName>
    <alternativeName>
        <fullName evidence="1">tRNA hydroxylation protein O</fullName>
    </alternativeName>
</protein>
<evidence type="ECO:0000255" key="1">
    <source>
        <dbReference type="HAMAP-Rule" id="MF_00469"/>
    </source>
</evidence>
<keyword id="KW-0560">Oxidoreductase</keyword>
<keyword id="KW-0819">tRNA processing</keyword>
<dbReference type="EC" id="1.14.-.-" evidence="1"/>
<dbReference type="EMBL" id="CP000110">
    <property type="protein sequence ID" value="ABB35384.1"/>
    <property type="molecule type" value="Genomic_DNA"/>
</dbReference>
<dbReference type="RefSeq" id="WP_011364595.1">
    <property type="nucleotide sequence ID" value="NC_007516.1"/>
</dbReference>
<dbReference type="SMR" id="Q3AJ48"/>
<dbReference type="STRING" id="110662.Syncc9605_1635"/>
<dbReference type="KEGG" id="syd:Syncc9605_1635"/>
<dbReference type="eggNOG" id="COG1054">
    <property type="taxonomic scope" value="Bacteria"/>
</dbReference>
<dbReference type="HOGENOM" id="CLU_038878_0_0_3"/>
<dbReference type="OrthoDB" id="9778326at2"/>
<dbReference type="GO" id="GO:0016705">
    <property type="term" value="F:oxidoreductase activity, acting on paired donors, with incorporation or reduction of molecular oxygen"/>
    <property type="evidence" value="ECO:0007669"/>
    <property type="project" value="UniProtKB-UniRule"/>
</dbReference>
<dbReference type="GO" id="GO:0006400">
    <property type="term" value="P:tRNA modification"/>
    <property type="evidence" value="ECO:0007669"/>
    <property type="project" value="UniProtKB-UniRule"/>
</dbReference>
<dbReference type="CDD" id="cd01518">
    <property type="entry name" value="RHOD_YceA"/>
    <property type="match status" value="1"/>
</dbReference>
<dbReference type="Gene3D" id="3.30.70.100">
    <property type="match status" value="1"/>
</dbReference>
<dbReference type="Gene3D" id="3.40.250.10">
    <property type="entry name" value="Rhodanese-like domain"/>
    <property type="match status" value="1"/>
</dbReference>
<dbReference type="HAMAP" id="MF_00469">
    <property type="entry name" value="TrhO"/>
    <property type="match status" value="1"/>
</dbReference>
<dbReference type="InterPro" id="IPR001763">
    <property type="entry name" value="Rhodanese-like_dom"/>
</dbReference>
<dbReference type="InterPro" id="IPR036873">
    <property type="entry name" value="Rhodanese-like_dom_sf"/>
</dbReference>
<dbReference type="InterPro" id="IPR020936">
    <property type="entry name" value="TrhO"/>
</dbReference>
<dbReference type="InterPro" id="IPR040503">
    <property type="entry name" value="TRHO_N"/>
</dbReference>
<dbReference type="NCBIfam" id="NF001136">
    <property type="entry name" value="PRK00142.1-4"/>
    <property type="match status" value="1"/>
</dbReference>
<dbReference type="PANTHER" id="PTHR43268:SF3">
    <property type="entry name" value="RHODANESE-LIKE DOMAIN-CONTAINING PROTEIN 7-RELATED"/>
    <property type="match status" value="1"/>
</dbReference>
<dbReference type="PANTHER" id="PTHR43268">
    <property type="entry name" value="THIOSULFATE SULFURTRANSFERASE/RHODANESE-LIKE DOMAIN-CONTAINING PROTEIN 2"/>
    <property type="match status" value="1"/>
</dbReference>
<dbReference type="Pfam" id="PF00581">
    <property type="entry name" value="Rhodanese"/>
    <property type="match status" value="1"/>
</dbReference>
<dbReference type="Pfam" id="PF17773">
    <property type="entry name" value="UPF0176_N"/>
    <property type="match status" value="1"/>
</dbReference>
<dbReference type="SMART" id="SM00450">
    <property type="entry name" value="RHOD"/>
    <property type="match status" value="1"/>
</dbReference>
<dbReference type="SUPFAM" id="SSF52821">
    <property type="entry name" value="Rhodanese/Cell cycle control phosphatase"/>
    <property type="match status" value="1"/>
</dbReference>
<dbReference type="PROSITE" id="PS50206">
    <property type="entry name" value="RHODANESE_3"/>
    <property type="match status" value="1"/>
</dbReference>
<feature type="chain" id="PRO_0000242951" description="tRNA uridine(34) hydroxylase">
    <location>
        <begin position="1"/>
        <end position="327"/>
    </location>
</feature>
<feature type="domain" description="Rhodanese" evidence="1">
    <location>
        <begin position="142"/>
        <end position="240"/>
    </location>
</feature>
<feature type="active site" description="Cysteine persulfide intermediate" evidence="1">
    <location>
        <position position="200"/>
    </location>
</feature>
<reference key="1">
    <citation type="submission" date="2005-07" db="EMBL/GenBank/DDBJ databases">
        <title>Complete sequence of Synechococcus sp. CC9605.</title>
        <authorList>
            <consortium name="US DOE Joint Genome Institute"/>
            <person name="Copeland A."/>
            <person name="Lucas S."/>
            <person name="Lapidus A."/>
            <person name="Barry K."/>
            <person name="Detter J.C."/>
            <person name="Glavina T."/>
            <person name="Hammon N."/>
            <person name="Israni S."/>
            <person name="Pitluck S."/>
            <person name="Schmutz J."/>
            <person name="Martinez M."/>
            <person name="Larimer F."/>
            <person name="Land M."/>
            <person name="Kyrpides N."/>
            <person name="Ivanova N."/>
            <person name="Richardson P."/>
        </authorList>
    </citation>
    <scope>NUCLEOTIDE SEQUENCE [LARGE SCALE GENOMIC DNA]</scope>
    <source>
        <strain>CC9605</strain>
    </source>
</reference>
<comment type="function">
    <text evidence="1">Catalyzes oxygen-dependent 5-hydroxyuridine (ho5U) modification at position 34 in tRNAs.</text>
</comment>
<comment type="catalytic activity">
    <reaction evidence="1">
        <text>uridine(34) in tRNA + AH2 + O2 = 5-hydroxyuridine(34) in tRNA + A + H2O</text>
        <dbReference type="Rhea" id="RHEA:64224"/>
        <dbReference type="Rhea" id="RHEA-COMP:11727"/>
        <dbReference type="Rhea" id="RHEA-COMP:13381"/>
        <dbReference type="ChEBI" id="CHEBI:13193"/>
        <dbReference type="ChEBI" id="CHEBI:15377"/>
        <dbReference type="ChEBI" id="CHEBI:15379"/>
        <dbReference type="ChEBI" id="CHEBI:17499"/>
        <dbReference type="ChEBI" id="CHEBI:65315"/>
        <dbReference type="ChEBI" id="CHEBI:136877"/>
    </reaction>
</comment>
<comment type="similarity">
    <text evidence="1">Belongs to the TrhO family.</text>
</comment>